<keyword id="KW-0025">Alternative splicing</keyword>
<keyword id="KW-0238">DNA-binding</keyword>
<keyword id="KW-0539">Nucleus</keyword>
<keyword id="KW-1185">Reference proteome</keyword>
<keyword id="KW-0677">Repeat</keyword>
<keyword id="KW-0804">Transcription</keyword>
<keyword id="KW-0805">Transcription regulation</keyword>
<name>Y3204_ORYSJ</name>
<dbReference type="EMBL" id="AC097280">
    <property type="protein sequence ID" value="AAO34490.1"/>
    <property type="molecule type" value="Genomic_DNA"/>
</dbReference>
<dbReference type="EMBL" id="DP000009">
    <property type="protein sequence ID" value="ABF97664.1"/>
    <property type="molecule type" value="Genomic_DNA"/>
</dbReference>
<dbReference type="EMBL" id="DP000009">
    <property type="protein sequence ID" value="ABF97665.1"/>
    <property type="molecule type" value="Genomic_DNA"/>
</dbReference>
<dbReference type="EMBL" id="AP008209">
    <property type="protein sequence ID" value="BAF12589.1"/>
    <property type="molecule type" value="Genomic_DNA"/>
</dbReference>
<dbReference type="EMBL" id="AP014959">
    <property type="protein sequence ID" value="BAS85303.1"/>
    <property type="molecule type" value="Genomic_DNA"/>
</dbReference>
<dbReference type="EMBL" id="CM000140">
    <property type="protein sequence ID" value="EAZ27810.1"/>
    <property type="molecule type" value="Genomic_DNA"/>
</dbReference>
<dbReference type="EMBL" id="AK102169">
    <property type="protein sequence ID" value="BAG95422.1"/>
    <property type="molecule type" value="mRNA"/>
</dbReference>
<dbReference type="RefSeq" id="XP_015628610.1">
    <molecule id="Q851W5-1"/>
    <property type="nucleotide sequence ID" value="XM_015773124.1"/>
</dbReference>
<dbReference type="RefSeq" id="XP_015628611.1">
    <molecule id="Q851W5-1"/>
    <property type="nucleotide sequence ID" value="XM_015773125.1"/>
</dbReference>
<dbReference type="SMR" id="Q851W5"/>
<dbReference type="FunCoup" id="Q851W5">
    <property type="interactions" value="1712"/>
</dbReference>
<dbReference type="STRING" id="39947.Q851W5"/>
<dbReference type="PaxDb" id="39947-Q851W5"/>
<dbReference type="GeneID" id="4333466"/>
<dbReference type="KEGG" id="dosa:Os03g0620400"/>
<dbReference type="eggNOG" id="ENOG502QSIS">
    <property type="taxonomic scope" value="Eukaryota"/>
</dbReference>
<dbReference type="InParanoid" id="Q851W5"/>
<dbReference type="OMA" id="HNAKFIF"/>
<dbReference type="OrthoDB" id="605275at2759"/>
<dbReference type="Proteomes" id="UP000000763">
    <property type="component" value="Chromosome 3"/>
</dbReference>
<dbReference type="Proteomes" id="UP000007752">
    <property type="component" value="Chromosome 3"/>
</dbReference>
<dbReference type="Proteomes" id="UP000059680">
    <property type="component" value="Chromosome 3"/>
</dbReference>
<dbReference type="GO" id="GO:0005634">
    <property type="term" value="C:nucleus"/>
    <property type="evidence" value="ECO:0007669"/>
    <property type="project" value="UniProtKB-SubCell"/>
</dbReference>
<dbReference type="GO" id="GO:0003677">
    <property type="term" value="F:DNA binding"/>
    <property type="evidence" value="ECO:0007669"/>
    <property type="project" value="UniProtKB-KW"/>
</dbReference>
<dbReference type="CDD" id="cd10017">
    <property type="entry name" value="B3_DNA"/>
    <property type="match status" value="3"/>
</dbReference>
<dbReference type="Gene3D" id="2.40.330.10">
    <property type="entry name" value="DNA-binding pseudobarrel domain"/>
    <property type="match status" value="3"/>
</dbReference>
<dbReference type="InterPro" id="IPR003340">
    <property type="entry name" value="B3_DNA-bd"/>
</dbReference>
<dbReference type="InterPro" id="IPR015300">
    <property type="entry name" value="DNA-bd_pseudobarrel_sf"/>
</dbReference>
<dbReference type="InterPro" id="IPR044837">
    <property type="entry name" value="REM16-like"/>
</dbReference>
<dbReference type="PANTHER" id="PTHR31391:SF48">
    <property type="entry name" value="B3 DOMAIN-CONTAINING PROTEIN OS03G0620500"/>
    <property type="match status" value="1"/>
</dbReference>
<dbReference type="PANTHER" id="PTHR31391">
    <property type="entry name" value="B3 DOMAIN-CONTAINING PROTEIN OS11G0197600-RELATED"/>
    <property type="match status" value="1"/>
</dbReference>
<dbReference type="Pfam" id="PF02362">
    <property type="entry name" value="B3"/>
    <property type="match status" value="3"/>
</dbReference>
<dbReference type="SMART" id="SM01019">
    <property type="entry name" value="B3"/>
    <property type="match status" value="3"/>
</dbReference>
<dbReference type="SUPFAM" id="SSF101936">
    <property type="entry name" value="DNA-binding pseudobarrel domain"/>
    <property type="match status" value="3"/>
</dbReference>
<dbReference type="PROSITE" id="PS50863">
    <property type="entry name" value="B3"/>
    <property type="match status" value="3"/>
</dbReference>
<protein>
    <recommendedName>
        <fullName>B3 domain-containing protein Os03g0620400</fullName>
    </recommendedName>
</protein>
<feature type="chain" id="PRO_0000376955" description="B3 domain-containing protein Os03g0620400">
    <location>
        <begin position="1"/>
        <end position="519"/>
    </location>
</feature>
<feature type="DNA-binding region" description="TF-B3 1" evidence="1">
    <location>
        <begin position="26"/>
        <end position="119"/>
    </location>
</feature>
<feature type="DNA-binding region" description="TF-B3 2" evidence="1">
    <location>
        <begin position="249"/>
        <end position="349"/>
    </location>
</feature>
<feature type="DNA-binding region" description="TF-B3 3" evidence="1">
    <location>
        <begin position="416"/>
        <end position="516"/>
    </location>
</feature>
<feature type="region of interest" description="Disordered" evidence="2">
    <location>
        <begin position="138"/>
        <end position="218"/>
    </location>
</feature>
<feature type="compositionally biased region" description="Acidic residues" evidence="2">
    <location>
        <begin position="189"/>
        <end position="209"/>
    </location>
</feature>
<feature type="splice variant" id="VSP_037441" description="In isoform 2." evidence="3">
    <location>
        <begin position="1"/>
        <end position="203"/>
    </location>
</feature>
<feature type="splice variant" id="VSP_037442" description="In isoform 2." evidence="3">
    <original>SYELDDPQMPPGRNYVLSRWTSLSEAQEEKVDMLVQDIQPEIPVFVAIMKHSNVNSRRACLV</original>
    <variation>MNCAWCMVSCTICSLFLSVEKAVKFALVYRPLHNAKFIFSFLYFTSQKYIYSIIFCLDQV</variation>
    <location>
        <begin position="204"/>
        <end position="265"/>
    </location>
</feature>
<accession>Q851W5</accession>
<accession>Q10GN6</accession>
<gene>
    <name type="ordered locus">Os03g0620400</name>
    <name type="ordered locus">LOC_Os03g42280</name>
    <name type="ORF">OsJ_11757</name>
    <name type="ORF">OSJNBb0111B07.7</name>
</gene>
<organism>
    <name type="scientific">Oryza sativa subsp. japonica</name>
    <name type="common">Rice</name>
    <dbReference type="NCBI Taxonomy" id="39947"/>
    <lineage>
        <taxon>Eukaryota</taxon>
        <taxon>Viridiplantae</taxon>
        <taxon>Streptophyta</taxon>
        <taxon>Embryophyta</taxon>
        <taxon>Tracheophyta</taxon>
        <taxon>Spermatophyta</taxon>
        <taxon>Magnoliopsida</taxon>
        <taxon>Liliopsida</taxon>
        <taxon>Poales</taxon>
        <taxon>Poaceae</taxon>
        <taxon>BOP clade</taxon>
        <taxon>Oryzoideae</taxon>
        <taxon>Oryzeae</taxon>
        <taxon>Oryzinae</taxon>
        <taxon>Oryza</taxon>
        <taxon>Oryza sativa</taxon>
    </lineage>
</organism>
<reference key="1">
    <citation type="journal article" date="2005" name="Genome Res.">
        <title>Sequence, annotation, and analysis of synteny between rice chromosome 3 and diverged grass species.</title>
        <authorList>
            <consortium name="The rice chromosome 3 sequencing consortium"/>
            <person name="Buell C.R."/>
            <person name="Yuan Q."/>
            <person name="Ouyang S."/>
            <person name="Liu J."/>
            <person name="Zhu W."/>
            <person name="Wang A."/>
            <person name="Maiti R."/>
            <person name="Haas B."/>
            <person name="Wortman J."/>
            <person name="Pertea M."/>
            <person name="Jones K.M."/>
            <person name="Kim M."/>
            <person name="Overton L."/>
            <person name="Tsitrin T."/>
            <person name="Fadrosh D."/>
            <person name="Bera J."/>
            <person name="Weaver B."/>
            <person name="Jin S."/>
            <person name="Johri S."/>
            <person name="Reardon M."/>
            <person name="Webb K."/>
            <person name="Hill J."/>
            <person name="Moffat K."/>
            <person name="Tallon L."/>
            <person name="Van Aken S."/>
            <person name="Lewis M."/>
            <person name="Utterback T."/>
            <person name="Feldblyum T."/>
            <person name="Zismann V."/>
            <person name="Iobst S."/>
            <person name="Hsiao J."/>
            <person name="de Vazeille A.R."/>
            <person name="Salzberg S.L."/>
            <person name="White O."/>
            <person name="Fraser C.M."/>
            <person name="Yu Y."/>
            <person name="Kim H."/>
            <person name="Rambo T."/>
            <person name="Currie J."/>
            <person name="Collura K."/>
            <person name="Kernodle-Thompson S."/>
            <person name="Wei F."/>
            <person name="Kudrna K."/>
            <person name="Ammiraju J.S.S."/>
            <person name="Luo M."/>
            <person name="Goicoechea J.L."/>
            <person name="Wing R.A."/>
            <person name="Henry D."/>
            <person name="Oates R."/>
            <person name="Palmer M."/>
            <person name="Pries G."/>
            <person name="Saski C."/>
            <person name="Simmons J."/>
            <person name="Soderlund C."/>
            <person name="Nelson W."/>
            <person name="de la Bastide M."/>
            <person name="Spiegel L."/>
            <person name="Nascimento L."/>
            <person name="Huang E."/>
            <person name="Preston R."/>
            <person name="Zutavern T."/>
            <person name="Palmer L."/>
            <person name="O'Shaughnessy A."/>
            <person name="Dike S."/>
            <person name="McCombie W.R."/>
            <person name="Minx P."/>
            <person name="Cordum H."/>
            <person name="Wilson R."/>
            <person name="Jin W."/>
            <person name="Lee H.R."/>
            <person name="Jiang J."/>
            <person name="Jackson S."/>
        </authorList>
    </citation>
    <scope>NUCLEOTIDE SEQUENCE [LARGE SCALE GENOMIC DNA]</scope>
    <source>
        <strain>cv. Nipponbare</strain>
    </source>
</reference>
<reference key="2">
    <citation type="journal article" date="2005" name="Nature">
        <title>The map-based sequence of the rice genome.</title>
        <authorList>
            <consortium name="International rice genome sequencing project (IRGSP)"/>
        </authorList>
    </citation>
    <scope>NUCLEOTIDE SEQUENCE [LARGE SCALE GENOMIC DNA]</scope>
    <source>
        <strain>cv. Nipponbare</strain>
    </source>
</reference>
<reference key="3">
    <citation type="journal article" date="2008" name="Nucleic Acids Res.">
        <title>The rice annotation project database (RAP-DB): 2008 update.</title>
        <authorList>
            <consortium name="The rice annotation project (RAP)"/>
        </authorList>
    </citation>
    <scope>GENOME REANNOTATION</scope>
    <source>
        <strain>cv. Nipponbare</strain>
    </source>
</reference>
<reference key="4">
    <citation type="journal article" date="2013" name="Rice">
        <title>Improvement of the Oryza sativa Nipponbare reference genome using next generation sequence and optical map data.</title>
        <authorList>
            <person name="Kawahara Y."/>
            <person name="de la Bastide M."/>
            <person name="Hamilton J.P."/>
            <person name="Kanamori H."/>
            <person name="McCombie W.R."/>
            <person name="Ouyang S."/>
            <person name="Schwartz D.C."/>
            <person name="Tanaka T."/>
            <person name="Wu J."/>
            <person name="Zhou S."/>
            <person name="Childs K.L."/>
            <person name="Davidson R.M."/>
            <person name="Lin H."/>
            <person name="Quesada-Ocampo L."/>
            <person name="Vaillancourt B."/>
            <person name="Sakai H."/>
            <person name="Lee S.S."/>
            <person name="Kim J."/>
            <person name="Numa H."/>
            <person name="Itoh T."/>
            <person name="Buell C.R."/>
            <person name="Matsumoto T."/>
        </authorList>
    </citation>
    <scope>GENOME REANNOTATION</scope>
    <source>
        <strain>cv. Nipponbare</strain>
    </source>
</reference>
<reference key="5">
    <citation type="journal article" date="2005" name="PLoS Biol.">
        <title>The genomes of Oryza sativa: a history of duplications.</title>
        <authorList>
            <person name="Yu J."/>
            <person name="Wang J."/>
            <person name="Lin W."/>
            <person name="Li S."/>
            <person name="Li H."/>
            <person name="Zhou J."/>
            <person name="Ni P."/>
            <person name="Dong W."/>
            <person name="Hu S."/>
            <person name="Zeng C."/>
            <person name="Zhang J."/>
            <person name="Zhang Y."/>
            <person name="Li R."/>
            <person name="Xu Z."/>
            <person name="Li S."/>
            <person name="Li X."/>
            <person name="Zheng H."/>
            <person name="Cong L."/>
            <person name="Lin L."/>
            <person name="Yin J."/>
            <person name="Geng J."/>
            <person name="Li G."/>
            <person name="Shi J."/>
            <person name="Liu J."/>
            <person name="Lv H."/>
            <person name="Li J."/>
            <person name="Wang J."/>
            <person name="Deng Y."/>
            <person name="Ran L."/>
            <person name="Shi X."/>
            <person name="Wang X."/>
            <person name="Wu Q."/>
            <person name="Li C."/>
            <person name="Ren X."/>
            <person name="Wang J."/>
            <person name="Wang X."/>
            <person name="Li D."/>
            <person name="Liu D."/>
            <person name="Zhang X."/>
            <person name="Ji Z."/>
            <person name="Zhao W."/>
            <person name="Sun Y."/>
            <person name="Zhang Z."/>
            <person name="Bao J."/>
            <person name="Han Y."/>
            <person name="Dong L."/>
            <person name="Ji J."/>
            <person name="Chen P."/>
            <person name="Wu S."/>
            <person name="Liu J."/>
            <person name="Xiao Y."/>
            <person name="Bu D."/>
            <person name="Tan J."/>
            <person name="Yang L."/>
            <person name="Ye C."/>
            <person name="Zhang J."/>
            <person name="Xu J."/>
            <person name="Zhou Y."/>
            <person name="Yu Y."/>
            <person name="Zhang B."/>
            <person name="Zhuang S."/>
            <person name="Wei H."/>
            <person name="Liu B."/>
            <person name="Lei M."/>
            <person name="Yu H."/>
            <person name="Li Y."/>
            <person name="Xu H."/>
            <person name="Wei S."/>
            <person name="He X."/>
            <person name="Fang L."/>
            <person name="Zhang Z."/>
            <person name="Zhang Y."/>
            <person name="Huang X."/>
            <person name="Su Z."/>
            <person name="Tong W."/>
            <person name="Li J."/>
            <person name="Tong Z."/>
            <person name="Li S."/>
            <person name="Ye J."/>
            <person name="Wang L."/>
            <person name="Fang L."/>
            <person name="Lei T."/>
            <person name="Chen C.-S."/>
            <person name="Chen H.-C."/>
            <person name="Xu Z."/>
            <person name="Li H."/>
            <person name="Huang H."/>
            <person name="Zhang F."/>
            <person name="Xu H."/>
            <person name="Li N."/>
            <person name="Zhao C."/>
            <person name="Li S."/>
            <person name="Dong L."/>
            <person name="Huang Y."/>
            <person name="Li L."/>
            <person name="Xi Y."/>
            <person name="Qi Q."/>
            <person name="Li W."/>
            <person name="Zhang B."/>
            <person name="Hu W."/>
            <person name="Zhang Y."/>
            <person name="Tian X."/>
            <person name="Jiao Y."/>
            <person name="Liang X."/>
            <person name="Jin J."/>
            <person name="Gao L."/>
            <person name="Zheng W."/>
            <person name="Hao B."/>
            <person name="Liu S.-M."/>
            <person name="Wang W."/>
            <person name="Yuan L."/>
            <person name="Cao M."/>
            <person name="McDermott J."/>
            <person name="Samudrala R."/>
            <person name="Wang J."/>
            <person name="Wong G.K.-S."/>
            <person name="Yang H."/>
        </authorList>
    </citation>
    <scope>NUCLEOTIDE SEQUENCE [LARGE SCALE GENOMIC DNA]</scope>
    <source>
        <strain>cv. Nipponbare</strain>
    </source>
</reference>
<reference key="6">
    <citation type="journal article" date="2003" name="Science">
        <title>Collection, mapping, and annotation of over 28,000 cDNA clones from japonica rice.</title>
        <authorList>
            <consortium name="The rice full-length cDNA consortium"/>
        </authorList>
    </citation>
    <scope>NUCLEOTIDE SEQUENCE [LARGE SCALE MRNA] (ISOFORM 2)</scope>
    <source>
        <strain>cv. Nipponbare</strain>
    </source>
</reference>
<evidence type="ECO:0000255" key="1">
    <source>
        <dbReference type="PROSITE-ProRule" id="PRU00326"/>
    </source>
</evidence>
<evidence type="ECO:0000256" key="2">
    <source>
        <dbReference type="SAM" id="MobiDB-lite"/>
    </source>
</evidence>
<evidence type="ECO:0000303" key="3">
    <source>
    </source>
</evidence>
<proteinExistence type="evidence at transcript level"/>
<sequence>MAGQGSQKKKSCDWSKRYVDHLNGKMKCFHLQMSANFGHSMTIPNKFLDHFGGTLSRTIELVSPKGIVYIVKVTEHMNKTILQCGWEAFVDAHHIEENDSLLFRHIENSRFEVLILDSDGCEKVFTCAGIKKTSSVQERNAAPVDISRSTHDETTQSSGSKKFVRCQRASDSQRGKTAKLAETSSSGESGEEGTDSSTSEDESSYELDDPQMPPGRNYVLSRWTSLSEAQEEKVDMLVQDIQPEIPVFVAIMKHSNVNSRRACLVIPKRYASAHFPLESQTITLQRQGKNKKWYPMFYIRKDGSGYMLYGCWKNFVRDNHVKEGDMCIFHLTKFTGGEFGATVHLLRETKSGSLGSFHTSHKRFDLRDGRTWPKVTGVRRVSSRPYLTADRVSLTEEQVRKVEEVVHSIQSEGPMYVSIMNKSNVGTDGLYIIIFGRQFATRYLPEGEQTLTLLMTGKSNAWQVKMRPRSGDAQMITTGWRHFVHDNHLQIEDICLFQLMNDESKLTMTVHIIRRNEKS</sequence>
<comment type="subcellular location">
    <subcellularLocation>
        <location evidence="1">Nucleus</location>
    </subcellularLocation>
</comment>
<comment type="alternative products">
    <event type="alternative splicing"/>
    <isoform>
        <id>Q851W5-1</id>
        <name>1</name>
        <sequence type="displayed"/>
    </isoform>
    <isoform>
        <id>Q851W5-2</id>
        <name>2</name>
        <sequence type="described" ref="VSP_037441 VSP_037442"/>
    </isoform>
</comment>